<name>LEPA_STRT1</name>
<gene>
    <name evidence="1" type="primary">lepA</name>
    <name type="ordered locus">str0911</name>
</gene>
<protein>
    <recommendedName>
        <fullName evidence="1">Elongation factor 4</fullName>
        <shortName evidence="1">EF-4</shortName>
        <ecNumber evidence="1">3.6.5.n1</ecNumber>
    </recommendedName>
    <alternativeName>
        <fullName evidence="1">Ribosomal back-translocase LepA</fullName>
    </alternativeName>
</protein>
<accession>Q5M008</accession>
<keyword id="KW-1003">Cell membrane</keyword>
<keyword id="KW-0342">GTP-binding</keyword>
<keyword id="KW-0378">Hydrolase</keyword>
<keyword id="KW-0472">Membrane</keyword>
<keyword id="KW-0547">Nucleotide-binding</keyword>
<keyword id="KW-0648">Protein biosynthesis</keyword>
<proteinExistence type="inferred from homology"/>
<evidence type="ECO:0000255" key="1">
    <source>
        <dbReference type="HAMAP-Rule" id="MF_00071"/>
    </source>
</evidence>
<feature type="chain" id="PRO_0000224803" description="Elongation factor 4">
    <location>
        <begin position="1"/>
        <end position="610"/>
    </location>
</feature>
<feature type="domain" description="tr-type G">
    <location>
        <begin position="12"/>
        <end position="194"/>
    </location>
</feature>
<feature type="binding site" evidence="1">
    <location>
        <begin position="24"/>
        <end position="29"/>
    </location>
    <ligand>
        <name>GTP</name>
        <dbReference type="ChEBI" id="CHEBI:37565"/>
    </ligand>
</feature>
<feature type="binding site" evidence="1">
    <location>
        <begin position="141"/>
        <end position="144"/>
    </location>
    <ligand>
        <name>GTP</name>
        <dbReference type="ChEBI" id="CHEBI:37565"/>
    </ligand>
</feature>
<comment type="function">
    <text evidence="1">Required for accurate and efficient protein synthesis under certain stress conditions. May act as a fidelity factor of the translation reaction, by catalyzing a one-codon backward translocation of tRNAs on improperly translocated ribosomes. Back-translocation proceeds from a post-translocation (POST) complex to a pre-translocation (PRE) complex, thus giving elongation factor G a second chance to translocate the tRNAs correctly. Binds to ribosomes in a GTP-dependent manner.</text>
</comment>
<comment type="catalytic activity">
    <reaction evidence="1">
        <text>GTP + H2O = GDP + phosphate + H(+)</text>
        <dbReference type="Rhea" id="RHEA:19669"/>
        <dbReference type="ChEBI" id="CHEBI:15377"/>
        <dbReference type="ChEBI" id="CHEBI:15378"/>
        <dbReference type="ChEBI" id="CHEBI:37565"/>
        <dbReference type="ChEBI" id="CHEBI:43474"/>
        <dbReference type="ChEBI" id="CHEBI:58189"/>
        <dbReference type="EC" id="3.6.5.n1"/>
    </reaction>
</comment>
<comment type="subcellular location">
    <subcellularLocation>
        <location evidence="1">Cell membrane</location>
        <topology evidence="1">Peripheral membrane protein</topology>
        <orientation evidence="1">Cytoplasmic side</orientation>
    </subcellularLocation>
</comment>
<comment type="similarity">
    <text evidence="1">Belongs to the TRAFAC class translation factor GTPase superfamily. Classic translation factor GTPase family. LepA subfamily.</text>
</comment>
<dbReference type="EC" id="3.6.5.n1" evidence="1"/>
<dbReference type="EMBL" id="CP000024">
    <property type="protein sequence ID" value="AAV62497.1"/>
    <property type="molecule type" value="Genomic_DNA"/>
</dbReference>
<dbReference type="RefSeq" id="WP_011227164.1">
    <property type="nucleotide sequence ID" value="NC_006449.1"/>
</dbReference>
<dbReference type="SMR" id="Q5M008"/>
<dbReference type="GeneID" id="66898781"/>
<dbReference type="KEGG" id="stc:str0911"/>
<dbReference type="HOGENOM" id="CLU_009995_3_3_9"/>
<dbReference type="GO" id="GO:0005886">
    <property type="term" value="C:plasma membrane"/>
    <property type="evidence" value="ECO:0007669"/>
    <property type="project" value="UniProtKB-SubCell"/>
</dbReference>
<dbReference type="GO" id="GO:0005525">
    <property type="term" value="F:GTP binding"/>
    <property type="evidence" value="ECO:0007669"/>
    <property type="project" value="UniProtKB-UniRule"/>
</dbReference>
<dbReference type="GO" id="GO:0003924">
    <property type="term" value="F:GTPase activity"/>
    <property type="evidence" value="ECO:0007669"/>
    <property type="project" value="UniProtKB-UniRule"/>
</dbReference>
<dbReference type="GO" id="GO:0043022">
    <property type="term" value="F:ribosome binding"/>
    <property type="evidence" value="ECO:0007669"/>
    <property type="project" value="UniProtKB-UniRule"/>
</dbReference>
<dbReference type="GO" id="GO:0003746">
    <property type="term" value="F:translation elongation factor activity"/>
    <property type="evidence" value="ECO:0007669"/>
    <property type="project" value="UniProtKB-UniRule"/>
</dbReference>
<dbReference type="GO" id="GO:0045727">
    <property type="term" value="P:positive regulation of translation"/>
    <property type="evidence" value="ECO:0007669"/>
    <property type="project" value="UniProtKB-UniRule"/>
</dbReference>
<dbReference type="CDD" id="cd03699">
    <property type="entry name" value="EF4_II"/>
    <property type="match status" value="1"/>
</dbReference>
<dbReference type="CDD" id="cd16260">
    <property type="entry name" value="EF4_III"/>
    <property type="match status" value="1"/>
</dbReference>
<dbReference type="CDD" id="cd01890">
    <property type="entry name" value="LepA"/>
    <property type="match status" value="1"/>
</dbReference>
<dbReference type="CDD" id="cd03709">
    <property type="entry name" value="lepA_C"/>
    <property type="match status" value="1"/>
</dbReference>
<dbReference type="FunFam" id="3.40.50.300:FF:000078">
    <property type="entry name" value="Elongation factor 4"/>
    <property type="match status" value="1"/>
</dbReference>
<dbReference type="FunFam" id="2.40.30.10:FF:000015">
    <property type="entry name" value="Translation factor GUF1, mitochondrial"/>
    <property type="match status" value="1"/>
</dbReference>
<dbReference type="FunFam" id="3.30.70.240:FF:000007">
    <property type="entry name" value="Translation factor GUF1, mitochondrial"/>
    <property type="match status" value="1"/>
</dbReference>
<dbReference type="FunFam" id="3.30.70.2570:FF:000001">
    <property type="entry name" value="Translation factor GUF1, mitochondrial"/>
    <property type="match status" value="1"/>
</dbReference>
<dbReference type="FunFam" id="3.30.70.870:FF:000004">
    <property type="entry name" value="Translation factor GUF1, mitochondrial"/>
    <property type="match status" value="1"/>
</dbReference>
<dbReference type="Gene3D" id="3.30.70.240">
    <property type="match status" value="1"/>
</dbReference>
<dbReference type="Gene3D" id="3.30.70.2570">
    <property type="entry name" value="Elongation factor 4, C-terminal domain"/>
    <property type="match status" value="1"/>
</dbReference>
<dbReference type="Gene3D" id="3.30.70.870">
    <property type="entry name" value="Elongation Factor G (Translational Gtpase), domain 3"/>
    <property type="match status" value="1"/>
</dbReference>
<dbReference type="Gene3D" id="3.40.50.300">
    <property type="entry name" value="P-loop containing nucleotide triphosphate hydrolases"/>
    <property type="match status" value="1"/>
</dbReference>
<dbReference type="Gene3D" id="2.40.30.10">
    <property type="entry name" value="Translation factors"/>
    <property type="match status" value="1"/>
</dbReference>
<dbReference type="HAMAP" id="MF_00071">
    <property type="entry name" value="LepA"/>
    <property type="match status" value="1"/>
</dbReference>
<dbReference type="InterPro" id="IPR006297">
    <property type="entry name" value="EF-4"/>
</dbReference>
<dbReference type="InterPro" id="IPR035647">
    <property type="entry name" value="EFG_III/V"/>
</dbReference>
<dbReference type="InterPro" id="IPR000640">
    <property type="entry name" value="EFG_V-like"/>
</dbReference>
<dbReference type="InterPro" id="IPR004161">
    <property type="entry name" value="EFTu-like_2"/>
</dbReference>
<dbReference type="InterPro" id="IPR031157">
    <property type="entry name" value="G_TR_CS"/>
</dbReference>
<dbReference type="InterPro" id="IPR038363">
    <property type="entry name" value="LepA_C_sf"/>
</dbReference>
<dbReference type="InterPro" id="IPR013842">
    <property type="entry name" value="LepA_CTD"/>
</dbReference>
<dbReference type="InterPro" id="IPR035654">
    <property type="entry name" value="LepA_IV"/>
</dbReference>
<dbReference type="InterPro" id="IPR027417">
    <property type="entry name" value="P-loop_NTPase"/>
</dbReference>
<dbReference type="InterPro" id="IPR005225">
    <property type="entry name" value="Small_GTP-bd"/>
</dbReference>
<dbReference type="InterPro" id="IPR000795">
    <property type="entry name" value="T_Tr_GTP-bd_dom"/>
</dbReference>
<dbReference type="NCBIfam" id="TIGR01393">
    <property type="entry name" value="lepA"/>
    <property type="match status" value="1"/>
</dbReference>
<dbReference type="NCBIfam" id="TIGR00231">
    <property type="entry name" value="small_GTP"/>
    <property type="match status" value="1"/>
</dbReference>
<dbReference type="PANTHER" id="PTHR43512:SF4">
    <property type="entry name" value="TRANSLATION FACTOR GUF1 HOMOLOG, CHLOROPLASTIC"/>
    <property type="match status" value="1"/>
</dbReference>
<dbReference type="PANTHER" id="PTHR43512">
    <property type="entry name" value="TRANSLATION FACTOR GUF1-RELATED"/>
    <property type="match status" value="1"/>
</dbReference>
<dbReference type="Pfam" id="PF00679">
    <property type="entry name" value="EFG_C"/>
    <property type="match status" value="1"/>
</dbReference>
<dbReference type="Pfam" id="PF00009">
    <property type="entry name" value="GTP_EFTU"/>
    <property type="match status" value="1"/>
</dbReference>
<dbReference type="Pfam" id="PF03144">
    <property type="entry name" value="GTP_EFTU_D2"/>
    <property type="match status" value="1"/>
</dbReference>
<dbReference type="Pfam" id="PF06421">
    <property type="entry name" value="LepA_C"/>
    <property type="match status" value="1"/>
</dbReference>
<dbReference type="PRINTS" id="PR00315">
    <property type="entry name" value="ELONGATNFCT"/>
</dbReference>
<dbReference type="SMART" id="SM00838">
    <property type="entry name" value="EFG_C"/>
    <property type="match status" value="1"/>
</dbReference>
<dbReference type="SUPFAM" id="SSF54980">
    <property type="entry name" value="EF-G C-terminal domain-like"/>
    <property type="match status" value="2"/>
</dbReference>
<dbReference type="SUPFAM" id="SSF52540">
    <property type="entry name" value="P-loop containing nucleoside triphosphate hydrolases"/>
    <property type="match status" value="1"/>
</dbReference>
<dbReference type="PROSITE" id="PS00301">
    <property type="entry name" value="G_TR_1"/>
    <property type="match status" value="1"/>
</dbReference>
<dbReference type="PROSITE" id="PS51722">
    <property type="entry name" value="G_TR_2"/>
    <property type="match status" value="1"/>
</dbReference>
<organism>
    <name type="scientific">Streptococcus thermophilus (strain CNRZ 1066)</name>
    <dbReference type="NCBI Taxonomy" id="299768"/>
    <lineage>
        <taxon>Bacteria</taxon>
        <taxon>Bacillati</taxon>
        <taxon>Bacillota</taxon>
        <taxon>Bacilli</taxon>
        <taxon>Lactobacillales</taxon>
        <taxon>Streptococcaceae</taxon>
        <taxon>Streptococcus</taxon>
    </lineage>
</organism>
<sequence>MPNIEELKQRQEKIRNFSIIAHIDHGKSTLADRILEKTETVSSREMQAQLLDSMDLERERGITIKLNAIELNYKAKDGETYIFHLIDTPGHVDFTYEVSRSLAACEGAILVVDAAQGIEAQTLANVYLALDNDLEILPVINKIDLPAADPERVRTEIEDVIGLDASEAVLASAKAGIGIEEILEQIVEKVPAPQGDVEAPLQALIFDSVYDAYRGVILQVRVVNGMVKTGDKIQMMSNGKTFDVTEVGIFTPKAVGRDYLATGDVGYVAASIKTVADTRVGDTVTLADNPAAEPLHGYKQMNPMVFAGLYPIESNKYNDLREALEKLQLNDASLQFEPETSQALGFGFRCGFLGLLHMDVIQERLEREFNIDLIMTAPSVVYHVNTTDGEMLEVSNPSEFPDPTRIDAIEEPYVKAQIMVPQEYVGAVMELAQRKRGDFETMEYIDDNRVNVIYQIPLAEIVFDFFDKLKSSTRGYASFDYELSEYRRSQLVKMDILLNGDKVDALSFIVHREFAYERGKLIVDKLKKIIPRQQFEVPIQAAIGQKIVARTDIKALRKNVLAKCYGGDVSRKRKLLEKQKAGKKRMKAIGSVEVPQEAFLSVLSMDEDEK</sequence>
<reference key="1">
    <citation type="journal article" date="2004" name="Nat. Biotechnol.">
        <title>Complete sequence and comparative genome analysis of the dairy bacterium Streptococcus thermophilus.</title>
        <authorList>
            <person name="Bolotin A."/>
            <person name="Quinquis B."/>
            <person name="Renault P."/>
            <person name="Sorokin A."/>
            <person name="Ehrlich S.D."/>
            <person name="Kulakauskas S."/>
            <person name="Lapidus A."/>
            <person name="Goltsman E."/>
            <person name="Mazur M."/>
            <person name="Pusch G.D."/>
            <person name="Fonstein M."/>
            <person name="Overbeek R."/>
            <person name="Kyprides N."/>
            <person name="Purnelle B."/>
            <person name="Prozzi D."/>
            <person name="Ngui K."/>
            <person name="Masuy D."/>
            <person name="Hancy F."/>
            <person name="Burteau S."/>
            <person name="Boutry M."/>
            <person name="Delcour J."/>
            <person name="Goffeau A."/>
            <person name="Hols P."/>
        </authorList>
    </citation>
    <scope>NUCLEOTIDE SEQUENCE [LARGE SCALE GENOMIC DNA]</scope>
    <source>
        <strain>CNRZ 1066</strain>
    </source>
</reference>